<keyword id="KW-0025">Alternative splicing</keyword>
<keyword id="KW-0325">Glycoprotein</keyword>
<keyword id="KW-0333">Golgi apparatus</keyword>
<keyword id="KW-0472">Membrane</keyword>
<keyword id="KW-1267">Proteomics identification</keyword>
<keyword id="KW-1185">Reference proteome</keyword>
<keyword id="KW-0735">Signal-anchor</keyword>
<keyword id="KW-0808">Transferase</keyword>
<keyword id="KW-0812">Transmembrane</keyword>
<keyword id="KW-1133">Transmembrane helix</keyword>
<protein>
    <recommendedName>
        <fullName>Chondroitin sulfate glucuronyltransferase</fullName>
        <ecNumber>2.4.1.226</ecNumber>
    </recommendedName>
    <alternativeName>
        <fullName>CSGlcA-T</fullName>
    </alternativeName>
    <alternativeName>
        <fullName>Chondroitin glucuronyltransferase</fullName>
    </alternativeName>
    <alternativeName>
        <fullName>Chondroitin polymerizing factor 2</fullName>
        <shortName>ChPF-2</shortName>
    </alternativeName>
    <alternativeName>
        <fullName>Chondroitin synthase 3</fullName>
        <shortName>ChSy-3</shortName>
    </alternativeName>
    <alternativeName>
        <fullName>N-acetylgalactosaminyl-proteoglycan 3-beta-glucuronosyltransferase</fullName>
    </alternativeName>
</protein>
<comment type="function">
    <text evidence="3 4">Transfers glucuronic acid (GlcUA) from UDP-GlcUA to N-acetylgalactosamine residues on the non-reducing end of the elongating chondroitin polymer. Has no N-acetylgalactosaminyltransferase activity.</text>
</comment>
<comment type="catalytic activity">
    <reaction>
        <text>3-O-(beta-D-GalNAc-(1-&gt;4)-beta-D-GlcA-(1-&gt;3)-beta-D-Gal-(1-&gt;3)-beta-D-Gal-(1-&gt;4)-beta-D-Xyl)-L-seryl-[protein] + UDP-alpha-D-glucuronate = 3-O-(beta-D-GlcA-(1-&gt;3)-beta-D-GalNAc-(1-&gt;4)-beta-D-GlcA-(1-&gt;3)-beta-D-Gal-(1-&gt;3)-beta-D-Gal-(1-&gt;4)-beta-D-Xyl)-L-seryl-[protein] + UDP + H(+)</text>
        <dbReference type="Rhea" id="RHEA:23428"/>
        <dbReference type="Rhea" id="RHEA-COMP:12575"/>
        <dbReference type="Rhea" id="RHEA-COMP:14058"/>
        <dbReference type="ChEBI" id="CHEBI:15378"/>
        <dbReference type="ChEBI" id="CHEBI:58052"/>
        <dbReference type="ChEBI" id="CHEBI:58223"/>
        <dbReference type="ChEBI" id="CHEBI:132105"/>
        <dbReference type="ChEBI" id="CHEBI:138442"/>
        <dbReference type="EC" id="2.4.1.226"/>
    </reaction>
</comment>
<comment type="catalytic activity">
    <reaction>
        <text>3-O-{[beta-D-GalNAc-(1-&gt;4)-beta-D-GlcA-(1-&gt;3)](n)-beta-D-GalNAc-(1-&gt;4)-beta-D-GlcA-(1-&gt;3)-beta-D-Gal-(1-&gt;3)-beta-D-Gal-(1-&gt;4)-beta-D-Xyl}-L-seryl-[protein] + UDP-alpha-D-glucuronate = 3-O-{beta-D-GlcA-(1-&gt;3)-[beta-D-GalNAc-(1-&gt;4)-beta-D-GlcA-(1-&gt;3)](n)-beta-D-GalNAc-(1-&gt;4)-beta-D-GlcA-(1-&gt;3)-beta-D-Gal-(1-&gt;3)-beta-D-Gal-(1-&gt;4)-beta-D-Xyl}-L-seryl-[protein] + UDP + H(+)</text>
        <dbReference type="Rhea" id="RHEA:54996"/>
        <dbReference type="Rhea" id="RHEA-COMP:14060"/>
        <dbReference type="Rhea" id="RHEA-COMP:14061"/>
        <dbReference type="ChEBI" id="CHEBI:15378"/>
        <dbReference type="ChEBI" id="CHEBI:58052"/>
        <dbReference type="ChEBI" id="CHEBI:58223"/>
        <dbReference type="ChEBI" id="CHEBI:138444"/>
        <dbReference type="ChEBI" id="CHEBI:138445"/>
        <dbReference type="EC" id="2.4.1.226"/>
    </reaction>
</comment>
<comment type="subcellular location">
    <subcellularLocation>
        <location evidence="6">Golgi apparatus</location>
        <location evidence="6">Golgi stack membrane</location>
        <topology evidence="6">Single-pass type II membrane protein</topology>
    </subcellularLocation>
</comment>
<comment type="alternative products">
    <event type="alternative splicing"/>
    <isoform>
        <id>Q9P2E5-1</id>
        <name>1</name>
        <sequence type="displayed"/>
    </isoform>
    <isoform>
        <id>Q9P2E5-2</id>
        <name>2</name>
        <sequence type="described" ref="VSP_012724 VSP_012725"/>
    </isoform>
</comment>
<comment type="tissue specificity">
    <text evidence="3">Ubiquitous. Highly expressed in placenta, small intestine and pancreas.</text>
</comment>
<comment type="similarity">
    <text evidence="6">Belongs to the chondroitin N-acetylgalactosaminyltransferase family.</text>
</comment>
<comment type="sequence caution" evidence="6">
    <conflict type="erroneous initiation">
        <sequence resource="EMBL-CDS" id="BAA92640"/>
    </conflict>
</comment>
<gene>
    <name type="primary">CHPF2</name>
    <name type="synonym">CHSY3</name>
    <name type="synonym">CSGLCAT</name>
    <name type="synonym">KIAA1402</name>
    <name type="ORF">UNQ299/PRO339</name>
</gene>
<accession>Q9P2E5</accession>
<accession>B2DBD8</accession>
<accession>Q6P2I4</accession>
<accession>Q6UXD2</accession>
<evidence type="ECO:0000255" key="1"/>
<evidence type="ECO:0000256" key="2">
    <source>
        <dbReference type="SAM" id="MobiDB-lite"/>
    </source>
</evidence>
<evidence type="ECO:0000269" key="3">
    <source>
    </source>
</evidence>
<evidence type="ECO:0000269" key="4">
    <source>
    </source>
</evidence>
<evidence type="ECO:0000303" key="5">
    <source>
    </source>
</evidence>
<evidence type="ECO:0000305" key="6"/>
<reference key="1">
    <citation type="journal article" date="2008" name="J. Biol. Chem.">
        <title>Identification of chondroitin sulfate glucuronyltransferase as chondroitin synthase-3 involved in chondroitin polymerization: chondroitin polymerization is achieved by multiple enzyme complexes consisting of chondroitin synthase family members.</title>
        <authorList>
            <person name="Izumikawa T."/>
            <person name="Koike T."/>
            <person name="Shiozawa S."/>
            <person name="Sugahara K."/>
            <person name="Tamura J."/>
            <person name="Kitagawa H."/>
        </authorList>
    </citation>
    <scope>NUCLEOTIDE SEQUENCE [MRNA] (ISOFORM 1)</scope>
    <scope>FUNCTION</scope>
</reference>
<reference key="2">
    <citation type="journal article" date="2000" name="DNA Res.">
        <title>Prediction of the coding sequences of unidentified human genes. XVI. The complete sequences of 150 new cDNA clones from brain which code for large proteins in vitro.</title>
        <authorList>
            <person name="Nagase T."/>
            <person name="Kikuno R."/>
            <person name="Ishikawa K."/>
            <person name="Hirosawa M."/>
            <person name="Ohara O."/>
        </authorList>
    </citation>
    <scope>NUCLEOTIDE SEQUENCE [LARGE SCALE MRNA] (ISOFORM 1)</scope>
    <source>
        <tissue>Brain</tissue>
    </source>
</reference>
<reference key="3">
    <citation type="journal article" date="2003" name="Genome Res.">
        <title>The secreted protein discovery initiative (SPDI), a large-scale effort to identify novel human secreted and transmembrane proteins: a bioinformatics assessment.</title>
        <authorList>
            <person name="Clark H.F."/>
            <person name="Gurney A.L."/>
            <person name="Abaya E."/>
            <person name="Baker K."/>
            <person name="Baldwin D.T."/>
            <person name="Brush J."/>
            <person name="Chen J."/>
            <person name="Chow B."/>
            <person name="Chui C."/>
            <person name="Crowley C."/>
            <person name="Currell B."/>
            <person name="Deuel B."/>
            <person name="Dowd P."/>
            <person name="Eaton D."/>
            <person name="Foster J.S."/>
            <person name="Grimaldi C."/>
            <person name="Gu Q."/>
            <person name="Hass P.E."/>
            <person name="Heldens S."/>
            <person name="Huang A."/>
            <person name="Kim H.S."/>
            <person name="Klimowski L."/>
            <person name="Jin Y."/>
            <person name="Johnson S."/>
            <person name="Lee J."/>
            <person name="Lewis L."/>
            <person name="Liao D."/>
            <person name="Mark M.R."/>
            <person name="Robbie E."/>
            <person name="Sanchez C."/>
            <person name="Schoenfeld J."/>
            <person name="Seshagiri S."/>
            <person name="Simmons L."/>
            <person name="Singh J."/>
            <person name="Smith V."/>
            <person name="Stinson J."/>
            <person name="Vagts A."/>
            <person name="Vandlen R.L."/>
            <person name="Watanabe C."/>
            <person name="Wieand D."/>
            <person name="Woods K."/>
            <person name="Xie M.-H."/>
            <person name="Yansura D.G."/>
            <person name="Yi S."/>
            <person name="Yu G."/>
            <person name="Yuan J."/>
            <person name="Zhang M."/>
            <person name="Zhang Z."/>
            <person name="Goddard A.D."/>
            <person name="Wood W.I."/>
            <person name="Godowski P.J."/>
            <person name="Gray A.M."/>
        </authorList>
    </citation>
    <scope>NUCLEOTIDE SEQUENCE [LARGE SCALE MRNA] (ISOFORM 1)</scope>
</reference>
<reference key="4">
    <citation type="submission" date="2005-09" db="EMBL/GenBank/DDBJ databases">
        <authorList>
            <person name="Mural R.J."/>
            <person name="Istrail S."/>
            <person name="Sutton G.G."/>
            <person name="Florea L."/>
            <person name="Halpern A.L."/>
            <person name="Mobarry C.M."/>
            <person name="Lippert R."/>
            <person name="Walenz B."/>
            <person name="Shatkay H."/>
            <person name="Dew I."/>
            <person name="Miller J.R."/>
            <person name="Flanigan M.J."/>
            <person name="Edwards N.J."/>
            <person name="Bolanos R."/>
            <person name="Fasulo D."/>
            <person name="Halldorsson B.V."/>
            <person name="Hannenhalli S."/>
            <person name="Turner R."/>
            <person name="Yooseph S."/>
            <person name="Lu F."/>
            <person name="Nusskern D.R."/>
            <person name="Shue B.C."/>
            <person name="Zheng X.H."/>
            <person name="Zhong F."/>
            <person name="Delcher A.L."/>
            <person name="Huson D.H."/>
            <person name="Kravitz S.A."/>
            <person name="Mouchard L."/>
            <person name="Reinert K."/>
            <person name="Remington K.A."/>
            <person name="Clark A.G."/>
            <person name="Waterman M.S."/>
            <person name="Eichler E.E."/>
            <person name="Adams M.D."/>
            <person name="Hunkapiller M.W."/>
            <person name="Myers E.W."/>
            <person name="Venter J.C."/>
        </authorList>
    </citation>
    <scope>NUCLEOTIDE SEQUENCE [LARGE SCALE GENOMIC DNA]</scope>
</reference>
<reference key="5">
    <citation type="journal article" date="2004" name="Genome Res.">
        <title>The status, quality, and expansion of the NIH full-length cDNA project: the Mammalian Gene Collection (MGC).</title>
        <authorList>
            <consortium name="The MGC Project Team"/>
        </authorList>
    </citation>
    <scope>NUCLEOTIDE SEQUENCE [LARGE SCALE MRNA] (ISOFORM 2)</scope>
    <source>
        <tissue>Lung</tissue>
    </source>
</reference>
<reference key="6">
    <citation type="journal article" date="2002" name="J. Biol. Chem.">
        <title>Molecular cloning and characterization of a novel chondroitin sulfate glucuronyltransferase that transfers glucuronic acid to N-acetylgalactosamine.</title>
        <authorList>
            <person name="Gotoh M."/>
            <person name="Yada T."/>
            <person name="Sato T."/>
            <person name="Akashima T."/>
            <person name="Iwasaki H."/>
            <person name="Mochizuki H."/>
            <person name="Inaba N."/>
            <person name="Togayachi A."/>
            <person name="Kudo T."/>
            <person name="Watanabe H."/>
            <person name="Kimata K."/>
            <person name="Narimatsu H."/>
        </authorList>
    </citation>
    <scope>FUNCTION</scope>
    <scope>TISSUE SPECIFICITY</scope>
</reference>
<feature type="chain" id="PRO_0000189563" description="Chondroitin sulfate glucuronyltransferase">
    <location>
        <begin position="1"/>
        <end position="772"/>
    </location>
</feature>
<feature type="topological domain" description="Cytoplasmic" evidence="1">
    <location>
        <begin position="1"/>
        <end position="6"/>
    </location>
</feature>
<feature type="transmembrane region" description="Helical; Signal-anchor for type II membrane protein" evidence="1">
    <location>
        <begin position="7"/>
        <end position="29"/>
    </location>
</feature>
<feature type="topological domain" description="Lumenal" evidence="1">
    <location>
        <begin position="30"/>
        <end position="772"/>
    </location>
</feature>
<feature type="region of interest" description="Disordered" evidence="2">
    <location>
        <begin position="629"/>
        <end position="662"/>
    </location>
</feature>
<feature type="compositionally biased region" description="Pro residues" evidence="2">
    <location>
        <begin position="634"/>
        <end position="652"/>
    </location>
</feature>
<feature type="glycosylation site" description="N-linked (GlcNAc...) asparagine" evidence="1">
    <location>
        <position position="121"/>
    </location>
</feature>
<feature type="glycosylation site" description="N-linked (GlcNAc...) asparagine" evidence="1">
    <location>
        <position position="342"/>
    </location>
</feature>
<feature type="splice variant" id="VSP_012724" description="In isoform 2." evidence="5">
    <original>GPPGAGPDPPSPPGADPSRGAPIGGRFDR</original>
    <variation>NLITFPLSASAPGRARQDGGQIENCCCIF</variation>
    <location>
        <begin position="638"/>
        <end position="666"/>
    </location>
</feature>
<feature type="splice variant" id="VSP_012725" description="In isoform 2." evidence="5">
    <location>
        <begin position="667"/>
        <end position="772"/>
    </location>
</feature>
<dbReference type="EC" id="2.4.1.226"/>
<dbReference type="EMBL" id="AB095812">
    <property type="protein sequence ID" value="BAG30817.1"/>
    <property type="molecule type" value="mRNA"/>
</dbReference>
<dbReference type="EMBL" id="AB037823">
    <property type="protein sequence ID" value="BAA92640.1"/>
    <property type="status" value="ALT_INIT"/>
    <property type="molecule type" value="mRNA"/>
</dbReference>
<dbReference type="EMBL" id="AY358407">
    <property type="protein sequence ID" value="AAQ88773.1"/>
    <property type="molecule type" value="mRNA"/>
</dbReference>
<dbReference type="EMBL" id="CH471173">
    <property type="protein sequence ID" value="EAW54011.1"/>
    <property type="molecule type" value="Genomic_DNA"/>
</dbReference>
<dbReference type="EMBL" id="BC064509">
    <property type="protein sequence ID" value="AAH64509.1"/>
    <property type="molecule type" value="mRNA"/>
</dbReference>
<dbReference type="CCDS" id="CCDS34779.1">
    <molecule id="Q9P2E5-1"/>
</dbReference>
<dbReference type="RefSeq" id="NP_061888.1">
    <molecule id="Q9P2E5-1"/>
    <property type="nucleotide sequence ID" value="NM_019015.3"/>
</dbReference>
<dbReference type="SMR" id="Q9P2E5"/>
<dbReference type="BioGRID" id="119984">
    <property type="interactions" value="118"/>
</dbReference>
<dbReference type="FunCoup" id="Q9P2E5">
    <property type="interactions" value="887"/>
</dbReference>
<dbReference type="IntAct" id="Q9P2E5">
    <property type="interactions" value="51"/>
</dbReference>
<dbReference type="MINT" id="Q9P2E5"/>
<dbReference type="STRING" id="9606.ENSP00000035307"/>
<dbReference type="GlyConnect" id="1113">
    <property type="glycosylation" value="2 N-Linked glycans (1 site)"/>
</dbReference>
<dbReference type="GlyCosmos" id="Q9P2E5">
    <property type="glycosylation" value="2 sites, 2 glycans"/>
</dbReference>
<dbReference type="GlyGen" id="Q9P2E5">
    <property type="glycosylation" value="2 sites, 4 N-linked glycans (1 site)"/>
</dbReference>
<dbReference type="iPTMnet" id="Q9P2E5"/>
<dbReference type="PhosphoSitePlus" id="Q9P2E5"/>
<dbReference type="BioMuta" id="CHPF2"/>
<dbReference type="DMDM" id="67462204"/>
<dbReference type="jPOST" id="Q9P2E5"/>
<dbReference type="MassIVE" id="Q9P2E5"/>
<dbReference type="PaxDb" id="9606-ENSP00000035307"/>
<dbReference type="PeptideAtlas" id="Q9P2E5"/>
<dbReference type="ProteomicsDB" id="83794">
    <molecule id="Q9P2E5-1"/>
</dbReference>
<dbReference type="ProteomicsDB" id="83795">
    <molecule id="Q9P2E5-2"/>
</dbReference>
<dbReference type="Pumba" id="Q9P2E5"/>
<dbReference type="Antibodypedia" id="18744">
    <property type="antibodies" value="96 antibodies from 22 providers"/>
</dbReference>
<dbReference type="DNASU" id="54480"/>
<dbReference type="Ensembl" id="ENST00000035307.7">
    <molecule id="Q9P2E5-1"/>
    <property type="protein sequence ID" value="ENSP00000035307.2"/>
    <property type="gene ID" value="ENSG00000033100.17"/>
</dbReference>
<dbReference type="GeneID" id="54480"/>
<dbReference type="KEGG" id="hsa:54480"/>
<dbReference type="MANE-Select" id="ENST00000035307.7">
    <property type="protein sequence ID" value="ENSP00000035307.2"/>
    <property type="RefSeq nucleotide sequence ID" value="NM_019015.3"/>
    <property type="RefSeq protein sequence ID" value="NP_061888.1"/>
</dbReference>
<dbReference type="UCSC" id="uc003wjr.3">
    <molecule id="Q9P2E5-1"/>
    <property type="organism name" value="human"/>
</dbReference>
<dbReference type="AGR" id="HGNC:29270"/>
<dbReference type="CTD" id="54480"/>
<dbReference type="DisGeNET" id="54480"/>
<dbReference type="GeneCards" id="CHPF2"/>
<dbReference type="HGNC" id="HGNC:29270">
    <property type="gene designation" value="CHPF2"/>
</dbReference>
<dbReference type="HPA" id="ENSG00000033100">
    <property type="expression patterns" value="Low tissue specificity"/>
</dbReference>
<dbReference type="MIM" id="608037">
    <property type="type" value="gene"/>
</dbReference>
<dbReference type="neXtProt" id="NX_Q9P2E5"/>
<dbReference type="OpenTargets" id="ENSG00000033100"/>
<dbReference type="PharmGKB" id="PA165617920"/>
<dbReference type="VEuPathDB" id="HostDB:ENSG00000033100"/>
<dbReference type="eggNOG" id="KOG3708">
    <property type="taxonomic scope" value="Eukaryota"/>
</dbReference>
<dbReference type="GeneTree" id="ENSGT01050000244857"/>
<dbReference type="HOGENOM" id="CLU_016244_1_0_1"/>
<dbReference type="InParanoid" id="Q9P2E5"/>
<dbReference type="OMA" id="YLNRVRM"/>
<dbReference type="OrthoDB" id="9985088at2759"/>
<dbReference type="PAN-GO" id="Q9P2E5">
    <property type="GO annotations" value="2 GO annotations based on evolutionary models"/>
</dbReference>
<dbReference type="PhylomeDB" id="Q9P2E5"/>
<dbReference type="TreeFam" id="TF318303"/>
<dbReference type="BioCyc" id="MetaCyc:HS12080-MONOMER"/>
<dbReference type="BRENDA" id="2.4.1.226">
    <property type="organism ID" value="2681"/>
</dbReference>
<dbReference type="PathwayCommons" id="Q9P2E5"/>
<dbReference type="Reactome" id="R-HSA-2022870">
    <property type="pathway name" value="Chondroitin sulfate biosynthesis"/>
</dbReference>
<dbReference type="SignaLink" id="Q9P2E5"/>
<dbReference type="BioGRID-ORCS" id="54480">
    <property type="hits" value="13 hits in 1162 CRISPR screens"/>
</dbReference>
<dbReference type="ChiTaRS" id="CHPF2">
    <property type="organism name" value="human"/>
</dbReference>
<dbReference type="GenomeRNAi" id="54480"/>
<dbReference type="Pharos" id="Q9P2E5">
    <property type="development level" value="Tbio"/>
</dbReference>
<dbReference type="PRO" id="PR:Q9P2E5"/>
<dbReference type="Proteomes" id="UP000005640">
    <property type="component" value="Chromosome 7"/>
</dbReference>
<dbReference type="RNAct" id="Q9P2E5">
    <property type="molecule type" value="protein"/>
</dbReference>
<dbReference type="Bgee" id="ENSG00000033100">
    <property type="expression patterns" value="Expressed in stromal cell of endometrium and 101 other cell types or tissues"/>
</dbReference>
<dbReference type="ExpressionAtlas" id="Q9P2E5">
    <property type="expression patterns" value="baseline and differential"/>
</dbReference>
<dbReference type="GO" id="GO:0032580">
    <property type="term" value="C:Golgi cisterna membrane"/>
    <property type="evidence" value="ECO:0007669"/>
    <property type="project" value="UniProtKB-SubCell"/>
</dbReference>
<dbReference type="GO" id="GO:0000139">
    <property type="term" value="C:Golgi membrane"/>
    <property type="evidence" value="ECO:0000304"/>
    <property type="project" value="Reactome"/>
</dbReference>
<dbReference type="GO" id="GO:0016020">
    <property type="term" value="C:membrane"/>
    <property type="evidence" value="ECO:0007005"/>
    <property type="project" value="UniProtKB"/>
</dbReference>
<dbReference type="GO" id="GO:0047238">
    <property type="term" value="F:glucuronosyl-N-acetylgalactosaminyl-proteoglycan 4-beta-N-acetylgalactosaminyltransferase activity"/>
    <property type="evidence" value="ECO:0000318"/>
    <property type="project" value="GO_Central"/>
</dbReference>
<dbReference type="GO" id="GO:0050510">
    <property type="term" value="F:N-acetylgalactosaminyl-proteoglycan 3-beta-glucuronosyltransferase activity"/>
    <property type="evidence" value="ECO:0000304"/>
    <property type="project" value="Reactome"/>
</dbReference>
<dbReference type="FunFam" id="3.90.550.50:FF:000004">
    <property type="entry name" value="Hexosyltransferase"/>
    <property type="match status" value="1"/>
</dbReference>
<dbReference type="Gene3D" id="3.90.550.50">
    <property type="match status" value="1"/>
</dbReference>
<dbReference type="InterPro" id="IPR008428">
    <property type="entry name" value="Chond_GalNAc"/>
</dbReference>
<dbReference type="InterPro" id="IPR051227">
    <property type="entry name" value="CS_glycosyltransferase"/>
</dbReference>
<dbReference type="PANTHER" id="PTHR12369:SF14">
    <property type="entry name" value="CHONDROITIN SULFATE GLUCURONYLTRANSFERASE"/>
    <property type="match status" value="1"/>
</dbReference>
<dbReference type="PANTHER" id="PTHR12369">
    <property type="entry name" value="CHONDROITIN SYNTHASE"/>
    <property type="match status" value="1"/>
</dbReference>
<dbReference type="Pfam" id="PF05679">
    <property type="entry name" value="CHGN"/>
    <property type="match status" value="1"/>
</dbReference>
<organism>
    <name type="scientific">Homo sapiens</name>
    <name type="common">Human</name>
    <dbReference type="NCBI Taxonomy" id="9606"/>
    <lineage>
        <taxon>Eukaryota</taxon>
        <taxon>Metazoa</taxon>
        <taxon>Chordata</taxon>
        <taxon>Craniata</taxon>
        <taxon>Vertebrata</taxon>
        <taxon>Euteleostomi</taxon>
        <taxon>Mammalia</taxon>
        <taxon>Eutheria</taxon>
        <taxon>Euarchontoglires</taxon>
        <taxon>Primates</taxon>
        <taxon>Haplorrhini</taxon>
        <taxon>Catarrhini</taxon>
        <taxon>Hominidae</taxon>
        <taxon>Homo</taxon>
    </lineage>
</organism>
<proteinExistence type="evidence at protein level"/>
<sequence>MRLSSLLALLRPALPLILGLSLGCSLSLLRVSWIQGEGEDPCVEAVGERGGPQNPDSRARLDQSDEDFKPRIVPYYRDPNKPYKKVLRTRYIQTELGSRERLLVAVLTSRATLSTLAVAVNRTVAHHFPRLLYFTGQRGARAPAGMQVVSHGDERPAWLMSETLRHLHTHFGADYDWFFIMQDDTYVQAPRLAALAGHLSINQDLYLGRAEEFIGAGEQARYCHGGFGYLLSRSLLLRLRPHLDGCRGDILSARPDEWLGRCLIDSLGVGCVSQHQGQQYRSFELAKNRDPEKEGSSAFLSAFAVHPVSEGTLMYRLHKRFSALELERAYSEIEQLQAQIRNLTVLTPEGEAGLSWPVGLPAPFTPHSRFEVLGWDYFTEQHTFSCADGAPKCPLQGASRADVGDALETALEQLNRRYQPRLRFQKQRLLNGYRRFDPARGMEYTLDLLLECVTQRGHRRALARRVSLLRPLSRVEILPMPYVTEATRVQLVLPLLVAEAAAAPAFLEAFAANVLEPREHALLTLLLVYGPREGGRGAPDPFLGVKAAAAELERRYPGTRLAWLAVRAEAPSQVRLMDVVSKKHPVDTLFFLTTVWTRPGPEVLNRCRMNAISGWQAFFPVHFQEFNPALSPQRSPPGPPGAGPDPPSPPGADPSRGAPIGGRFDRQASAEGCFYNADYLAARARLAGELAGQEEEEALEGLEVMDVFLRFSGLHLFRAVEPGLVQKFSLRDCSPRLSEELYHRCRLSNLEGLGGRAQLAMALFEQEQANST</sequence>
<name>CHPF2_HUMAN</name>